<reference key="1">
    <citation type="submission" date="2006-06" db="EMBL/GenBank/DDBJ databases">
        <authorList>
            <consortium name="NIH - Mammalian Gene Collection (MGC) project"/>
        </authorList>
    </citation>
    <scope>NUCLEOTIDE SEQUENCE [LARGE SCALE MRNA]</scope>
    <source>
        <strain>Hereford</strain>
        <tissue>Hippocampus</tissue>
    </source>
</reference>
<keyword id="KW-0966">Cell projection</keyword>
<keyword id="KW-1185">Reference proteome</keyword>
<proteinExistence type="evidence at transcript level"/>
<accession>Q17QU3</accession>
<feature type="chain" id="PRO_0000327661" description="Arpin">
    <location>
        <begin position="1"/>
        <end position="226"/>
    </location>
</feature>
<feature type="region of interest" description="Disordered" evidence="2">
    <location>
        <begin position="187"/>
        <end position="226"/>
    </location>
</feature>
<feature type="region of interest" description="Necessary and sufficient for interaction with ARPC2" evidence="1">
    <location>
        <begin position="211"/>
        <end position="226"/>
    </location>
</feature>
<feature type="compositionally biased region" description="Polar residues" evidence="2">
    <location>
        <begin position="193"/>
        <end position="207"/>
    </location>
</feature>
<gene>
    <name type="primary">ARPIN</name>
</gene>
<protein>
    <recommendedName>
        <fullName>Arpin</fullName>
    </recommendedName>
</protein>
<dbReference type="EMBL" id="BC118178">
    <property type="protein sequence ID" value="AAI18179.1"/>
    <property type="molecule type" value="mRNA"/>
</dbReference>
<dbReference type="RefSeq" id="NP_001069772.1">
    <property type="nucleotide sequence ID" value="NM_001076304.1"/>
</dbReference>
<dbReference type="SMR" id="Q17QU3"/>
<dbReference type="FunCoup" id="Q17QU3">
    <property type="interactions" value="731"/>
</dbReference>
<dbReference type="STRING" id="9913.ENSBTAP00000063213"/>
<dbReference type="PaxDb" id="9913-ENSBTAP00000038580"/>
<dbReference type="GeneID" id="613997"/>
<dbReference type="KEGG" id="bta:613997"/>
<dbReference type="CTD" id="348110"/>
<dbReference type="VEuPathDB" id="HostDB:ENSBTAG00000027059"/>
<dbReference type="eggNOG" id="ENOG502R4IG">
    <property type="taxonomic scope" value="Eukaryota"/>
</dbReference>
<dbReference type="HOGENOM" id="CLU_106544_0_0_1"/>
<dbReference type="InParanoid" id="Q17QU3"/>
<dbReference type="OMA" id="QTVAFWI"/>
<dbReference type="OrthoDB" id="5953051at2759"/>
<dbReference type="Proteomes" id="UP000009136">
    <property type="component" value="Chromosome 21"/>
</dbReference>
<dbReference type="Bgee" id="ENSBTAG00000027059">
    <property type="expression patterns" value="Expressed in myometrium and 104 other cell types or tissues"/>
</dbReference>
<dbReference type="GO" id="GO:0030027">
    <property type="term" value="C:lamellipodium"/>
    <property type="evidence" value="ECO:0000250"/>
    <property type="project" value="UniProtKB"/>
</dbReference>
<dbReference type="GO" id="GO:0033058">
    <property type="term" value="P:directional locomotion"/>
    <property type="evidence" value="ECO:0000250"/>
    <property type="project" value="UniProtKB"/>
</dbReference>
<dbReference type="GO" id="GO:0051126">
    <property type="term" value="P:negative regulation of actin nucleation"/>
    <property type="evidence" value="ECO:0000250"/>
    <property type="project" value="UniProtKB"/>
</dbReference>
<dbReference type="GO" id="GO:0030336">
    <property type="term" value="P:negative regulation of cell migration"/>
    <property type="evidence" value="ECO:0000250"/>
    <property type="project" value="UniProtKB"/>
</dbReference>
<dbReference type="GO" id="GO:2000393">
    <property type="term" value="P:negative regulation of lamellipodium morphogenesis"/>
    <property type="evidence" value="ECO:0000250"/>
    <property type="project" value="UniProtKB"/>
</dbReference>
<dbReference type="InterPro" id="IPR018889">
    <property type="entry name" value="Arpin"/>
</dbReference>
<dbReference type="PANTHER" id="PTHR31199">
    <property type="entry name" value="ARPIN"/>
    <property type="match status" value="1"/>
</dbReference>
<dbReference type="PANTHER" id="PTHR31199:SF1">
    <property type="entry name" value="ARPIN"/>
    <property type="match status" value="1"/>
</dbReference>
<dbReference type="Pfam" id="PF10574">
    <property type="entry name" value="UPF0552"/>
    <property type="match status" value="1"/>
</dbReference>
<sequence>MSRIYQDSALRNKAVRSARLPGAWDPAAHQRGDGVLLEGELLDVSRHSILDAHGRKERYYVLYIRPSRIHRRKFDPKGNEIEPNFSATRKVNTGFLMSSYKVEAKGDSDRLTPEALKGLVNKPELLALTESLTPAETVAFWMPESEMEAMELELGAGVRLKTRGDGPFLDSLAKLEAGTVTKCNFAGDGKTGASWTDNIMAQKSSEGAASETREQGDGAADEEWDD</sequence>
<name>ARPIN_BOVIN</name>
<evidence type="ECO:0000250" key="1"/>
<evidence type="ECO:0000256" key="2">
    <source>
        <dbReference type="SAM" id="MobiDB-lite"/>
    </source>
</evidence>
<evidence type="ECO:0000305" key="3"/>
<comment type="function">
    <text evidence="1">Regulates actin polymerization by inhibiting the actin-nucleating activity of the Arp2/3 complex; the function is competitive with nucleation promoting factors. Participates in an incoherent feedforward loop at the lamellipodium tip where it inhibits the ARP2/2 complex in response to Rac signaling and where Rac also stimulates actin polymerization through the WAVE complex. Involved in steering cell migration by controlling its directional persistence (By similarity).</text>
</comment>
<comment type="subunit">
    <text evidence="1">Associates with the Arp2/3 complex. Interacts with ARPC2; enhanced by activated RAC1. Interacts with ARPC5; the interaction is dependent on RAC1 (By similarity).</text>
</comment>
<comment type="subcellular location">
    <subcellularLocation>
        <location evidence="1">Cell projection</location>
        <location evidence="1">Lamellipodium</location>
    </subcellularLocation>
    <text evidence="1">Colocalized with the WAVE complex at lamelliupodium tip.</text>
</comment>
<comment type="domain">
    <text evidence="1">The acidic C-terminus is necessary and sufficient to inhibit ARP2/3 complex activity.</text>
</comment>
<comment type="similarity">
    <text evidence="3">Belongs to the Arpin family.</text>
</comment>
<organism>
    <name type="scientific">Bos taurus</name>
    <name type="common">Bovine</name>
    <dbReference type="NCBI Taxonomy" id="9913"/>
    <lineage>
        <taxon>Eukaryota</taxon>
        <taxon>Metazoa</taxon>
        <taxon>Chordata</taxon>
        <taxon>Craniata</taxon>
        <taxon>Vertebrata</taxon>
        <taxon>Euteleostomi</taxon>
        <taxon>Mammalia</taxon>
        <taxon>Eutheria</taxon>
        <taxon>Laurasiatheria</taxon>
        <taxon>Artiodactyla</taxon>
        <taxon>Ruminantia</taxon>
        <taxon>Pecora</taxon>
        <taxon>Bovidae</taxon>
        <taxon>Bovinae</taxon>
        <taxon>Bos</taxon>
    </lineage>
</organism>